<accession>Q2SZI4</accession>
<feature type="chain" id="PRO_0000415177" description="Probable peptidoglycan glycosyltransferase FtsW">
    <location>
        <begin position="1"/>
        <end position="462"/>
    </location>
</feature>
<feature type="topological domain" description="Cytoplasmic" evidence="1">
    <location>
        <begin position="1"/>
        <end position="92"/>
    </location>
</feature>
<feature type="transmembrane region" description="Helical" evidence="2">
    <location>
        <begin position="93"/>
        <end position="113"/>
    </location>
</feature>
<feature type="topological domain" description="Periplasmic" evidence="1">
    <location>
        <begin position="114"/>
        <end position="127"/>
    </location>
</feature>
<feature type="transmembrane region" description="Helical" evidence="2">
    <location>
        <begin position="128"/>
        <end position="148"/>
    </location>
</feature>
<feature type="topological domain" description="Cytoplasmic" evidence="1">
    <location>
        <begin position="149"/>
        <end position="158"/>
    </location>
</feature>
<feature type="transmembrane region" description="Helical" evidence="2">
    <location>
        <begin position="159"/>
        <end position="179"/>
    </location>
</feature>
<feature type="topological domain" description="Periplasmic" evidence="1">
    <location>
        <begin position="180"/>
        <end position="192"/>
    </location>
</feature>
<feature type="transmembrane region" description="Helical" evidence="2">
    <location>
        <begin position="193"/>
        <end position="215"/>
    </location>
</feature>
<feature type="topological domain" description="Cytoplasmic" evidence="1">
    <location>
        <begin position="216"/>
        <end position="223"/>
    </location>
</feature>
<feature type="transmembrane region" description="Helical" evidence="2">
    <location>
        <begin position="224"/>
        <end position="244"/>
    </location>
</feature>
<feature type="topological domain" description="Periplasmic" evidence="1">
    <location>
        <begin position="245"/>
        <end position="247"/>
    </location>
</feature>
<feature type="transmembrane region" description="Helical" evidence="2">
    <location>
        <begin position="248"/>
        <end position="268"/>
    </location>
</feature>
<feature type="topological domain" description="Cytoplasmic" evidence="1">
    <location>
        <begin position="269"/>
        <end position="270"/>
    </location>
</feature>
<feature type="transmembrane region" description="Helical" evidence="2">
    <location>
        <begin position="271"/>
        <end position="291"/>
    </location>
</feature>
<feature type="topological domain" description="Periplasmic" evidence="1">
    <location>
        <begin position="292"/>
        <end position="349"/>
    </location>
</feature>
<feature type="transmembrane region" description="Helical" evidence="2">
    <location>
        <begin position="350"/>
        <end position="370"/>
    </location>
</feature>
<feature type="topological domain" description="Cytoplasmic" evidence="1">
    <location>
        <begin position="371"/>
        <end position="398"/>
    </location>
</feature>
<feature type="transmembrane region" description="Helical" evidence="2">
    <location>
        <begin position="399"/>
        <end position="419"/>
    </location>
</feature>
<feature type="topological domain" description="Periplasmic" evidence="1">
    <location>
        <begin position="420"/>
        <end position="425"/>
    </location>
</feature>
<feature type="transmembrane region" description="Helical" evidence="2">
    <location>
        <begin position="426"/>
        <end position="446"/>
    </location>
</feature>
<feature type="topological domain" description="Cytoplasmic" evidence="1">
    <location>
        <begin position="447"/>
        <end position="462"/>
    </location>
</feature>
<feature type="region of interest" description="Disordered" evidence="3">
    <location>
        <begin position="1"/>
        <end position="28"/>
    </location>
</feature>
<feature type="compositionally biased region" description="Basic residues" evidence="3">
    <location>
        <begin position="13"/>
        <end position="27"/>
    </location>
</feature>
<keyword id="KW-0131">Cell cycle</keyword>
<keyword id="KW-0132">Cell division</keyword>
<keyword id="KW-0997">Cell inner membrane</keyword>
<keyword id="KW-1003">Cell membrane</keyword>
<keyword id="KW-0133">Cell shape</keyword>
<keyword id="KW-0961">Cell wall biogenesis/degradation</keyword>
<keyword id="KW-0328">Glycosyltransferase</keyword>
<keyword id="KW-0472">Membrane</keyword>
<keyword id="KW-0573">Peptidoglycan synthesis</keyword>
<keyword id="KW-0808">Transferase</keyword>
<keyword id="KW-0812">Transmembrane</keyword>
<keyword id="KW-1133">Transmembrane helix</keyword>
<gene>
    <name evidence="2" type="primary">ftsW</name>
    <name type="ordered locus">BTH_I1117</name>
</gene>
<dbReference type="EC" id="2.4.99.28" evidence="2"/>
<dbReference type="EMBL" id="CP000086">
    <property type="protein sequence ID" value="ABC37168.1"/>
    <property type="molecule type" value="Genomic_DNA"/>
</dbReference>
<dbReference type="SMR" id="Q2SZI4"/>
<dbReference type="KEGG" id="bte:BTH_I1117"/>
<dbReference type="HOGENOM" id="CLU_029243_1_1_4"/>
<dbReference type="UniPathway" id="UPA00219"/>
<dbReference type="Proteomes" id="UP000001930">
    <property type="component" value="Chromosome I"/>
</dbReference>
<dbReference type="GO" id="GO:0032153">
    <property type="term" value="C:cell division site"/>
    <property type="evidence" value="ECO:0007669"/>
    <property type="project" value="UniProtKB-UniRule"/>
</dbReference>
<dbReference type="GO" id="GO:0005886">
    <property type="term" value="C:plasma membrane"/>
    <property type="evidence" value="ECO:0007669"/>
    <property type="project" value="UniProtKB-SubCell"/>
</dbReference>
<dbReference type="GO" id="GO:0015648">
    <property type="term" value="F:lipid-linked peptidoglycan transporter activity"/>
    <property type="evidence" value="ECO:0007669"/>
    <property type="project" value="TreeGrafter"/>
</dbReference>
<dbReference type="GO" id="GO:0008955">
    <property type="term" value="F:peptidoglycan glycosyltransferase activity"/>
    <property type="evidence" value="ECO:0007669"/>
    <property type="project" value="UniProtKB-UniRule"/>
</dbReference>
<dbReference type="GO" id="GO:0071555">
    <property type="term" value="P:cell wall organization"/>
    <property type="evidence" value="ECO:0007669"/>
    <property type="project" value="UniProtKB-KW"/>
</dbReference>
<dbReference type="GO" id="GO:0043093">
    <property type="term" value="P:FtsZ-dependent cytokinesis"/>
    <property type="evidence" value="ECO:0007669"/>
    <property type="project" value="UniProtKB-UniRule"/>
</dbReference>
<dbReference type="GO" id="GO:0009252">
    <property type="term" value="P:peptidoglycan biosynthetic process"/>
    <property type="evidence" value="ECO:0007669"/>
    <property type="project" value="UniProtKB-UniRule"/>
</dbReference>
<dbReference type="GO" id="GO:0008360">
    <property type="term" value="P:regulation of cell shape"/>
    <property type="evidence" value="ECO:0007669"/>
    <property type="project" value="UniProtKB-KW"/>
</dbReference>
<dbReference type="HAMAP" id="MF_00913">
    <property type="entry name" value="PGT_FtsW_proteobact"/>
    <property type="match status" value="1"/>
</dbReference>
<dbReference type="InterPro" id="IPR013437">
    <property type="entry name" value="FtsW"/>
</dbReference>
<dbReference type="InterPro" id="IPR001182">
    <property type="entry name" value="FtsW/RodA"/>
</dbReference>
<dbReference type="NCBIfam" id="TIGR02614">
    <property type="entry name" value="ftsW"/>
    <property type="match status" value="1"/>
</dbReference>
<dbReference type="PANTHER" id="PTHR30474">
    <property type="entry name" value="CELL CYCLE PROTEIN"/>
    <property type="match status" value="1"/>
</dbReference>
<dbReference type="PANTHER" id="PTHR30474:SF2">
    <property type="entry name" value="PEPTIDOGLYCAN GLYCOSYLTRANSFERASE FTSW-RELATED"/>
    <property type="match status" value="1"/>
</dbReference>
<dbReference type="Pfam" id="PF01098">
    <property type="entry name" value="FTSW_RODA_SPOVE"/>
    <property type="match status" value="1"/>
</dbReference>
<name>FTSW_BURTA</name>
<sequence length="462" mass="50343">MREPRHVPQLRASGRRFPQRGRRHRFGKRNDAMSWSDRLVSRFNGARDAGGGAAPRTAARAASGARAAAGGLASVVNGARPTRSRMLDFDYSLLWVSIALLGLGVVMVYSASIAMPDSPKYASYHDYAFLLRHCVSLVVAFVAAVIAFRVPVSTWDKYAPHLFLIALVGLVIVLIPHIGKGVNGARRWIPLGITNMQPSEIMKLAVTIYAANYTVRKQEYMQSFAKGFLPMAFAVGLVGALLLLEPDMGAFMVVAAIAMGVLFLGGVNGKLFGGLVATAVGTFTMLVWLSPWRRERIFAYLDPWDERYAQGKAYQLTHSLIAFGRGEWFGVGLGGSVEKLNYLPEAHTDFILAVIGEELGFVGVLVVILLFYWIVRRSFEIGRQALALDRTFAGLMAKGVGIWFGAQAFINMGVNLGLLPTKGLTLPLVSYGGSGILLNCISLAVLLRVDYENRVLMRGGKV</sequence>
<proteinExistence type="inferred from homology"/>
<comment type="function">
    <text evidence="2">Peptidoglycan polymerase that is essential for cell division.</text>
</comment>
<comment type="catalytic activity">
    <reaction evidence="2">
        <text>[GlcNAc-(1-&gt;4)-Mur2Ac(oyl-L-Ala-gamma-D-Glu-L-Lys-D-Ala-D-Ala)](n)-di-trans,octa-cis-undecaprenyl diphosphate + beta-D-GlcNAc-(1-&gt;4)-Mur2Ac(oyl-L-Ala-gamma-D-Glu-L-Lys-D-Ala-D-Ala)-di-trans,octa-cis-undecaprenyl diphosphate = [GlcNAc-(1-&gt;4)-Mur2Ac(oyl-L-Ala-gamma-D-Glu-L-Lys-D-Ala-D-Ala)](n+1)-di-trans,octa-cis-undecaprenyl diphosphate + di-trans,octa-cis-undecaprenyl diphosphate + H(+)</text>
        <dbReference type="Rhea" id="RHEA:23708"/>
        <dbReference type="Rhea" id="RHEA-COMP:9602"/>
        <dbReference type="Rhea" id="RHEA-COMP:9603"/>
        <dbReference type="ChEBI" id="CHEBI:15378"/>
        <dbReference type="ChEBI" id="CHEBI:58405"/>
        <dbReference type="ChEBI" id="CHEBI:60033"/>
        <dbReference type="ChEBI" id="CHEBI:78435"/>
        <dbReference type="EC" id="2.4.99.28"/>
    </reaction>
</comment>
<comment type="pathway">
    <text evidence="2">Cell wall biogenesis; peptidoglycan biosynthesis.</text>
</comment>
<comment type="subcellular location">
    <subcellularLocation>
        <location evidence="2">Cell inner membrane</location>
        <topology evidence="2">Multi-pass membrane protein</topology>
    </subcellularLocation>
    <text evidence="2">Localizes to the division septum.</text>
</comment>
<comment type="similarity">
    <text evidence="2">Belongs to the SEDS family. FtsW subfamily.</text>
</comment>
<evidence type="ECO:0000255" key="1"/>
<evidence type="ECO:0000255" key="2">
    <source>
        <dbReference type="HAMAP-Rule" id="MF_00913"/>
    </source>
</evidence>
<evidence type="ECO:0000256" key="3">
    <source>
        <dbReference type="SAM" id="MobiDB-lite"/>
    </source>
</evidence>
<reference key="1">
    <citation type="journal article" date="2005" name="BMC Genomics">
        <title>Bacterial genome adaptation to niches: divergence of the potential virulence genes in three Burkholderia species of different survival strategies.</title>
        <authorList>
            <person name="Kim H.S."/>
            <person name="Schell M.A."/>
            <person name="Yu Y."/>
            <person name="Ulrich R.L."/>
            <person name="Sarria S.H."/>
            <person name="Nierman W.C."/>
            <person name="DeShazer D."/>
        </authorList>
    </citation>
    <scope>NUCLEOTIDE SEQUENCE [LARGE SCALE GENOMIC DNA]</scope>
    <source>
        <strain>ATCC 700388 / DSM 13276 / CCUG 48851 / CIP 106301 / E264</strain>
    </source>
</reference>
<protein>
    <recommendedName>
        <fullName evidence="2">Probable peptidoglycan glycosyltransferase FtsW</fullName>
        <shortName evidence="2">PGT</shortName>
        <ecNumber evidence="2">2.4.99.28</ecNumber>
    </recommendedName>
    <alternativeName>
        <fullName evidence="2">Cell division protein FtsW</fullName>
    </alternativeName>
    <alternativeName>
        <fullName evidence="2">Cell wall polymerase</fullName>
    </alternativeName>
    <alternativeName>
        <fullName evidence="2">Peptidoglycan polymerase</fullName>
        <shortName evidence="2">PG polymerase</shortName>
    </alternativeName>
</protein>
<organism>
    <name type="scientific">Burkholderia thailandensis (strain ATCC 700388 / DSM 13276 / CCUG 48851 / CIP 106301 / E264)</name>
    <dbReference type="NCBI Taxonomy" id="271848"/>
    <lineage>
        <taxon>Bacteria</taxon>
        <taxon>Pseudomonadati</taxon>
        <taxon>Pseudomonadota</taxon>
        <taxon>Betaproteobacteria</taxon>
        <taxon>Burkholderiales</taxon>
        <taxon>Burkholderiaceae</taxon>
        <taxon>Burkholderia</taxon>
        <taxon>pseudomallei group</taxon>
    </lineage>
</organism>